<name>HIS6_EDWI9</name>
<dbReference type="EC" id="4.3.2.10" evidence="1"/>
<dbReference type="EMBL" id="CP001600">
    <property type="protein sequence ID" value="ACR69739.1"/>
    <property type="molecule type" value="Genomic_DNA"/>
</dbReference>
<dbReference type="RefSeq" id="WP_015871849.1">
    <property type="nucleotide sequence ID" value="NZ_CP169062.1"/>
</dbReference>
<dbReference type="SMR" id="C5BG16"/>
<dbReference type="STRING" id="67780.B6E78_04910"/>
<dbReference type="GeneID" id="69539474"/>
<dbReference type="KEGG" id="eic:NT01EI_2570"/>
<dbReference type="PATRIC" id="fig|634503.3.peg.2288"/>
<dbReference type="HOGENOM" id="CLU_048577_4_0_6"/>
<dbReference type="OrthoDB" id="9781903at2"/>
<dbReference type="UniPathway" id="UPA00031">
    <property type="reaction ID" value="UER00010"/>
</dbReference>
<dbReference type="Proteomes" id="UP000001485">
    <property type="component" value="Chromosome"/>
</dbReference>
<dbReference type="GO" id="GO:0005737">
    <property type="term" value="C:cytoplasm"/>
    <property type="evidence" value="ECO:0007669"/>
    <property type="project" value="UniProtKB-SubCell"/>
</dbReference>
<dbReference type="GO" id="GO:0000107">
    <property type="term" value="F:imidazoleglycerol-phosphate synthase activity"/>
    <property type="evidence" value="ECO:0007669"/>
    <property type="project" value="UniProtKB-UniRule"/>
</dbReference>
<dbReference type="GO" id="GO:0016829">
    <property type="term" value="F:lyase activity"/>
    <property type="evidence" value="ECO:0007669"/>
    <property type="project" value="UniProtKB-KW"/>
</dbReference>
<dbReference type="GO" id="GO:0000105">
    <property type="term" value="P:L-histidine biosynthetic process"/>
    <property type="evidence" value="ECO:0007669"/>
    <property type="project" value="UniProtKB-UniRule"/>
</dbReference>
<dbReference type="CDD" id="cd04731">
    <property type="entry name" value="HisF"/>
    <property type="match status" value="1"/>
</dbReference>
<dbReference type="FunFam" id="3.20.20.70:FF:000006">
    <property type="entry name" value="Imidazole glycerol phosphate synthase subunit HisF"/>
    <property type="match status" value="1"/>
</dbReference>
<dbReference type="Gene3D" id="3.20.20.70">
    <property type="entry name" value="Aldolase class I"/>
    <property type="match status" value="1"/>
</dbReference>
<dbReference type="HAMAP" id="MF_01013">
    <property type="entry name" value="HisF"/>
    <property type="match status" value="1"/>
</dbReference>
<dbReference type="InterPro" id="IPR013785">
    <property type="entry name" value="Aldolase_TIM"/>
</dbReference>
<dbReference type="InterPro" id="IPR006062">
    <property type="entry name" value="His_biosynth"/>
</dbReference>
<dbReference type="InterPro" id="IPR004651">
    <property type="entry name" value="HisF"/>
</dbReference>
<dbReference type="InterPro" id="IPR050064">
    <property type="entry name" value="IGPS_HisA/HisF"/>
</dbReference>
<dbReference type="InterPro" id="IPR011060">
    <property type="entry name" value="RibuloseP-bd_barrel"/>
</dbReference>
<dbReference type="NCBIfam" id="TIGR00735">
    <property type="entry name" value="hisF"/>
    <property type="match status" value="1"/>
</dbReference>
<dbReference type="PANTHER" id="PTHR21235:SF2">
    <property type="entry name" value="IMIDAZOLE GLYCEROL PHOSPHATE SYNTHASE HISHF"/>
    <property type="match status" value="1"/>
</dbReference>
<dbReference type="PANTHER" id="PTHR21235">
    <property type="entry name" value="IMIDAZOLE GLYCEROL PHOSPHATE SYNTHASE SUBUNIT HISF/H IGP SYNTHASE SUBUNIT HISF/H"/>
    <property type="match status" value="1"/>
</dbReference>
<dbReference type="Pfam" id="PF00977">
    <property type="entry name" value="His_biosynth"/>
    <property type="match status" value="1"/>
</dbReference>
<dbReference type="SUPFAM" id="SSF51366">
    <property type="entry name" value="Ribulose-phoshate binding barrel"/>
    <property type="match status" value="1"/>
</dbReference>
<proteinExistence type="inferred from homology"/>
<evidence type="ECO:0000255" key="1">
    <source>
        <dbReference type="HAMAP-Rule" id="MF_01013"/>
    </source>
</evidence>
<sequence>MLAKRIIPCLDVRDGQVVKGVQFRHHEIIGDIVPLARRYADEGADELVFYDITASADGRVVDKSWVARVAAAIDIPFCVAGGIRSVKEAGLLLSYGADKISINSPALAEPTLITRLADRFGVQCVVVGIDTWHDAASDSDRVYQFTGDEARTRATAWQTADWVQEVQRRGAGEIVLNMMNQDGVRSGYDLRQLEQIRAVCRVPLIASGGAGAPEHFLAAFSQADVDGALAASVFHKQIIQIGELKRYLALNGVEIRLC</sequence>
<accession>C5BG16</accession>
<organism>
    <name type="scientific">Edwardsiella ictaluri (strain 93-146)</name>
    <dbReference type="NCBI Taxonomy" id="634503"/>
    <lineage>
        <taxon>Bacteria</taxon>
        <taxon>Pseudomonadati</taxon>
        <taxon>Pseudomonadota</taxon>
        <taxon>Gammaproteobacteria</taxon>
        <taxon>Enterobacterales</taxon>
        <taxon>Hafniaceae</taxon>
        <taxon>Edwardsiella</taxon>
    </lineage>
</organism>
<protein>
    <recommendedName>
        <fullName evidence="1">Imidazole glycerol phosphate synthase subunit HisF</fullName>
        <ecNumber evidence="1">4.3.2.10</ecNumber>
    </recommendedName>
    <alternativeName>
        <fullName evidence="1">IGP synthase cyclase subunit</fullName>
    </alternativeName>
    <alternativeName>
        <fullName evidence="1">IGP synthase subunit HisF</fullName>
    </alternativeName>
    <alternativeName>
        <fullName evidence="1">ImGP synthase subunit HisF</fullName>
        <shortName evidence="1">IGPS subunit HisF</shortName>
    </alternativeName>
</protein>
<feature type="chain" id="PRO_1000213209" description="Imidazole glycerol phosphate synthase subunit HisF">
    <location>
        <begin position="1"/>
        <end position="258"/>
    </location>
</feature>
<feature type="active site" evidence="1">
    <location>
        <position position="11"/>
    </location>
</feature>
<feature type="active site" evidence="1">
    <location>
        <position position="130"/>
    </location>
</feature>
<keyword id="KW-0028">Amino-acid biosynthesis</keyword>
<keyword id="KW-0963">Cytoplasm</keyword>
<keyword id="KW-0368">Histidine biosynthesis</keyword>
<keyword id="KW-0456">Lyase</keyword>
<comment type="function">
    <text evidence="1">IGPS catalyzes the conversion of PRFAR and glutamine to IGP, AICAR and glutamate. The HisF subunit catalyzes the cyclization activity that produces IGP and AICAR from PRFAR using the ammonia provided by the HisH subunit.</text>
</comment>
<comment type="catalytic activity">
    <reaction evidence="1">
        <text>5-[(5-phospho-1-deoxy-D-ribulos-1-ylimino)methylamino]-1-(5-phospho-beta-D-ribosyl)imidazole-4-carboxamide + L-glutamine = D-erythro-1-(imidazol-4-yl)glycerol 3-phosphate + 5-amino-1-(5-phospho-beta-D-ribosyl)imidazole-4-carboxamide + L-glutamate + H(+)</text>
        <dbReference type="Rhea" id="RHEA:24793"/>
        <dbReference type="ChEBI" id="CHEBI:15378"/>
        <dbReference type="ChEBI" id="CHEBI:29985"/>
        <dbReference type="ChEBI" id="CHEBI:58278"/>
        <dbReference type="ChEBI" id="CHEBI:58359"/>
        <dbReference type="ChEBI" id="CHEBI:58475"/>
        <dbReference type="ChEBI" id="CHEBI:58525"/>
        <dbReference type="EC" id="4.3.2.10"/>
    </reaction>
</comment>
<comment type="pathway">
    <text evidence="1">Amino-acid biosynthesis; L-histidine biosynthesis; L-histidine from 5-phospho-alpha-D-ribose 1-diphosphate: step 5/9.</text>
</comment>
<comment type="subunit">
    <text evidence="1">Heterodimer of HisH and HisF.</text>
</comment>
<comment type="subcellular location">
    <subcellularLocation>
        <location evidence="1">Cytoplasm</location>
    </subcellularLocation>
</comment>
<comment type="similarity">
    <text evidence="1">Belongs to the HisA/HisF family.</text>
</comment>
<reference key="1">
    <citation type="submission" date="2009-03" db="EMBL/GenBank/DDBJ databases">
        <title>Complete genome sequence of Edwardsiella ictaluri 93-146.</title>
        <authorList>
            <person name="Williams M.L."/>
            <person name="Gillaspy A.F."/>
            <person name="Dyer D.W."/>
            <person name="Thune R.L."/>
            <person name="Waldbieser G.C."/>
            <person name="Schuster S.C."/>
            <person name="Gipson J."/>
            <person name="Zaitshik J."/>
            <person name="Landry C."/>
            <person name="Lawrence M.L."/>
        </authorList>
    </citation>
    <scope>NUCLEOTIDE SEQUENCE [LARGE SCALE GENOMIC DNA]</scope>
    <source>
        <strain>93-146</strain>
    </source>
</reference>
<gene>
    <name evidence="1" type="primary">hisF</name>
    <name type="ordered locus">NT01EI_2570</name>
</gene>